<comment type="cofactor">
    <cofactor evidence="1">
        <name>Zn(2+)</name>
        <dbReference type="ChEBI" id="CHEBI:29105"/>
    </cofactor>
    <text evidence="1">Binds 1 zinc ion per subunit.</text>
</comment>
<comment type="subcellular location">
    <subcellularLocation>
        <location evidence="1">Cell inner membrane</location>
        <topology evidence="1">Multi-pass membrane protein</topology>
    </subcellularLocation>
</comment>
<comment type="similarity">
    <text evidence="1">Belongs to the peptidase M48B family.</text>
</comment>
<protein>
    <recommendedName>
        <fullName evidence="1">Protease HtpX</fullName>
        <ecNumber evidence="1">3.4.24.-</ecNumber>
    </recommendedName>
    <alternativeName>
        <fullName evidence="1">Heat shock protein HtpX</fullName>
    </alternativeName>
</protein>
<evidence type="ECO:0000255" key="1">
    <source>
        <dbReference type="HAMAP-Rule" id="MF_00188"/>
    </source>
</evidence>
<proteinExistence type="inferred from homology"/>
<dbReference type="EC" id="3.4.24.-" evidence="1"/>
<dbReference type="EMBL" id="CU928160">
    <property type="protein sequence ID" value="CAQ98754.1"/>
    <property type="molecule type" value="Genomic_DNA"/>
</dbReference>
<dbReference type="RefSeq" id="WP_000984517.1">
    <property type="nucleotide sequence ID" value="NC_011741.1"/>
</dbReference>
<dbReference type="SMR" id="B7M2A5"/>
<dbReference type="MEROPS" id="M48.002"/>
<dbReference type="GeneID" id="93776079"/>
<dbReference type="KEGG" id="ecr:ECIAI1_1900"/>
<dbReference type="HOGENOM" id="CLU_042266_1_0_6"/>
<dbReference type="GO" id="GO:0005886">
    <property type="term" value="C:plasma membrane"/>
    <property type="evidence" value="ECO:0007669"/>
    <property type="project" value="UniProtKB-SubCell"/>
</dbReference>
<dbReference type="GO" id="GO:0004222">
    <property type="term" value="F:metalloendopeptidase activity"/>
    <property type="evidence" value="ECO:0007669"/>
    <property type="project" value="UniProtKB-UniRule"/>
</dbReference>
<dbReference type="GO" id="GO:0008270">
    <property type="term" value="F:zinc ion binding"/>
    <property type="evidence" value="ECO:0007669"/>
    <property type="project" value="UniProtKB-UniRule"/>
</dbReference>
<dbReference type="GO" id="GO:0006508">
    <property type="term" value="P:proteolysis"/>
    <property type="evidence" value="ECO:0007669"/>
    <property type="project" value="UniProtKB-KW"/>
</dbReference>
<dbReference type="CDD" id="cd07335">
    <property type="entry name" value="M48B_HtpX_like"/>
    <property type="match status" value="1"/>
</dbReference>
<dbReference type="FunFam" id="3.30.2010.10:FF:000001">
    <property type="entry name" value="Protease HtpX"/>
    <property type="match status" value="1"/>
</dbReference>
<dbReference type="Gene3D" id="3.30.2010.10">
    <property type="entry name" value="Metalloproteases ('zincins'), catalytic domain"/>
    <property type="match status" value="1"/>
</dbReference>
<dbReference type="HAMAP" id="MF_00188">
    <property type="entry name" value="Pept_M48_protease_HtpX"/>
    <property type="match status" value="1"/>
</dbReference>
<dbReference type="InterPro" id="IPR050083">
    <property type="entry name" value="HtpX_protease"/>
</dbReference>
<dbReference type="InterPro" id="IPR022919">
    <property type="entry name" value="Pept_M48_protease_HtpX"/>
</dbReference>
<dbReference type="InterPro" id="IPR001915">
    <property type="entry name" value="Peptidase_M48"/>
</dbReference>
<dbReference type="NCBIfam" id="NF003965">
    <property type="entry name" value="PRK05457.1"/>
    <property type="match status" value="1"/>
</dbReference>
<dbReference type="PANTHER" id="PTHR43221">
    <property type="entry name" value="PROTEASE HTPX"/>
    <property type="match status" value="1"/>
</dbReference>
<dbReference type="PANTHER" id="PTHR43221:SF1">
    <property type="entry name" value="PROTEASE HTPX"/>
    <property type="match status" value="1"/>
</dbReference>
<dbReference type="Pfam" id="PF01435">
    <property type="entry name" value="Peptidase_M48"/>
    <property type="match status" value="1"/>
</dbReference>
<feature type="chain" id="PRO_1000192742" description="Protease HtpX">
    <location>
        <begin position="1"/>
        <end position="293"/>
    </location>
</feature>
<feature type="transmembrane region" description="Helical" evidence="1">
    <location>
        <begin position="4"/>
        <end position="24"/>
    </location>
</feature>
<feature type="transmembrane region" description="Helical" evidence="1">
    <location>
        <begin position="34"/>
        <end position="54"/>
    </location>
</feature>
<feature type="transmembrane region" description="Helical" evidence="1">
    <location>
        <begin position="158"/>
        <end position="178"/>
    </location>
</feature>
<feature type="transmembrane region" description="Helical" evidence="1">
    <location>
        <begin position="193"/>
        <end position="213"/>
    </location>
</feature>
<feature type="active site" evidence="1">
    <location>
        <position position="140"/>
    </location>
</feature>
<feature type="binding site" evidence="1">
    <location>
        <position position="139"/>
    </location>
    <ligand>
        <name>Zn(2+)</name>
        <dbReference type="ChEBI" id="CHEBI:29105"/>
        <note>catalytic</note>
    </ligand>
</feature>
<feature type="binding site" evidence="1">
    <location>
        <position position="143"/>
    </location>
    <ligand>
        <name>Zn(2+)</name>
        <dbReference type="ChEBI" id="CHEBI:29105"/>
        <note>catalytic</note>
    </ligand>
</feature>
<feature type="binding site" evidence="1">
    <location>
        <position position="222"/>
    </location>
    <ligand>
        <name>Zn(2+)</name>
        <dbReference type="ChEBI" id="CHEBI:29105"/>
        <note>catalytic</note>
    </ligand>
</feature>
<reference key="1">
    <citation type="journal article" date="2009" name="PLoS Genet.">
        <title>Organised genome dynamics in the Escherichia coli species results in highly diverse adaptive paths.</title>
        <authorList>
            <person name="Touchon M."/>
            <person name="Hoede C."/>
            <person name="Tenaillon O."/>
            <person name="Barbe V."/>
            <person name="Baeriswyl S."/>
            <person name="Bidet P."/>
            <person name="Bingen E."/>
            <person name="Bonacorsi S."/>
            <person name="Bouchier C."/>
            <person name="Bouvet O."/>
            <person name="Calteau A."/>
            <person name="Chiapello H."/>
            <person name="Clermont O."/>
            <person name="Cruveiller S."/>
            <person name="Danchin A."/>
            <person name="Diard M."/>
            <person name="Dossat C."/>
            <person name="Karoui M.E."/>
            <person name="Frapy E."/>
            <person name="Garry L."/>
            <person name="Ghigo J.M."/>
            <person name="Gilles A.M."/>
            <person name="Johnson J."/>
            <person name="Le Bouguenec C."/>
            <person name="Lescat M."/>
            <person name="Mangenot S."/>
            <person name="Martinez-Jehanne V."/>
            <person name="Matic I."/>
            <person name="Nassif X."/>
            <person name="Oztas S."/>
            <person name="Petit M.A."/>
            <person name="Pichon C."/>
            <person name="Rouy Z."/>
            <person name="Ruf C.S."/>
            <person name="Schneider D."/>
            <person name="Tourret J."/>
            <person name="Vacherie B."/>
            <person name="Vallenet D."/>
            <person name="Medigue C."/>
            <person name="Rocha E.P.C."/>
            <person name="Denamur E."/>
        </authorList>
    </citation>
    <scope>NUCLEOTIDE SEQUENCE [LARGE SCALE GENOMIC DNA]</scope>
    <source>
        <strain>IAI1</strain>
    </source>
</reference>
<organism>
    <name type="scientific">Escherichia coli O8 (strain IAI1)</name>
    <dbReference type="NCBI Taxonomy" id="585034"/>
    <lineage>
        <taxon>Bacteria</taxon>
        <taxon>Pseudomonadati</taxon>
        <taxon>Pseudomonadota</taxon>
        <taxon>Gammaproteobacteria</taxon>
        <taxon>Enterobacterales</taxon>
        <taxon>Enterobacteriaceae</taxon>
        <taxon>Escherichia</taxon>
    </lineage>
</organism>
<name>HTPX_ECO8A</name>
<accession>B7M2A5</accession>
<keyword id="KW-0997">Cell inner membrane</keyword>
<keyword id="KW-1003">Cell membrane</keyword>
<keyword id="KW-0378">Hydrolase</keyword>
<keyword id="KW-0472">Membrane</keyword>
<keyword id="KW-0479">Metal-binding</keyword>
<keyword id="KW-0482">Metalloprotease</keyword>
<keyword id="KW-0645">Protease</keyword>
<keyword id="KW-0812">Transmembrane</keyword>
<keyword id="KW-1133">Transmembrane helix</keyword>
<keyword id="KW-0862">Zinc</keyword>
<sequence length="293" mass="31957">MMRIALFLLTNLAVMVVFGLVLSLTGIQSSSVQGLMIMALLFGFGGSFVSLLMSKWMALRSVGGEVIEQPRNERERWLVNTVATQARQAGIAMPQVAIYHAPDINAFATGARRDASLVAVSTGLLQNMSPDEAEAVIAHEISHIANGDMVTMTLIQGVVNTFVIFISRILAQLAAGFMGGNRDEGEESNGNPLIYFAVATVLELVFGILASIITMWFSRHREFHADAGSAKLVGREKMIAALQRLKTSYEPQEATSMMAFCINGKSKSLSELFMTHPPLDKRIEALRTGEYLK</sequence>
<gene>
    <name evidence="1" type="primary">htpX</name>
    <name type="ordered locus">ECIAI1_1900</name>
</gene>